<organism>
    <name type="scientific">Paraburkholderia phytofirmans (strain DSM 17436 / LMG 22146 / PsJN)</name>
    <name type="common">Burkholderia phytofirmans</name>
    <dbReference type="NCBI Taxonomy" id="398527"/>
    <lineage>
        <taxon>Bacteria</taxon>
        <taxon>Pseudomonadati</taxon>
        <taxon>Pseudomonadota</taxon>
        <taxon>Betaproteobacteria</taxon>
        <taxon>Burkholderiales</taxon>
        <taxon>Burkholderiaceae</taxon>
        <taxon>Paraburkholderia</taxon>
    </lineage>
</organism>
<keyword id="KW-0963">Cytoplasm</keyword>
<keyword id="KW-0350">Heme biosynthesis</keyword>
<keyword id="KW-0408">Iron</keyword>
<keyword id="KW-0456">Lyase</keyword>
<keyword id="KW-0479">Metal-binding</keyword>
<keyword id="KW-0627">Porphyrin biosynthesis</keyword>
<name>HEMH_PARPJ</name>
<evidence type="ECO:0000255" key="1">
    <source>
        <dbReference type="HAMAP-Rule" id="MF_00323"/>
    </source>
</evidence>
<proteinExistence type="inferred from homology"/>
<protein>
    <recommendedName>
        <fullName evidence="1">Ferrochelatase</fullName>
        <ecNumber evidence="1">4.98.1.1</ecNumber>
    </recommendedName>
    <alternativeName>
        <fullName evidence="1">Heme synthase</fullName>
    </alternativeName>
    <alternativeName>
        <fullName evidence="1">Protoheme ferro-lyase</fullName>
    </alternativeName>
</protein>
<sequence length="356" mass="39748">MRFDLERPSQNASSHRVAVLLINLGTPDAPTPRAVRRYLAQFLSDPRVVEIPALLWQIILRLLILPFRGVASAKKYAAVWMPEGSPLRVNTEKQVEGLRHLLQLNDYTVLVDYAMRYGTPGIPAMLNQLKLAGAERVLLMPMYPQYSSSTTATAFDDAFSALKRMRNQPEIRTVRQYADHPAYIAALAAQVHNYWHQHGRPDFAAGDKLVLSFHGVPKRTLDLGDPYHEQCQQTGALLMQALELTQVECRITFQSRFGKAEWLQPYTAPTLKELGAAGVRRADVFCPGFTADCLETIEEIGMEVRDEFLHAGGKDFHRIPCLNASQAWIAALGEIVAQNLQGWPVQALPVPHTTGA</sequence>
<reference key="1">
    <citation type="journal article" date="2011" name="J. Bacteriol.">
        <title>Complete genome sequence of the plant growth-promoting endophyte Burkholderia phytofirmans strain PsJN.</title>
        <authorList>
            <person name="Weilharter A."/>
            <person name="Mitter B."/>
            <person name="Shin M.V."/>
            <person name="Chain P.S."/>
            <person name="Nowak J."/>
            <person name="Sessitsch A."/>
        </authorList>
    </citation>
    <scope>NUCLEOTIDE SEQUENCE [LARGE SCALE GENOMIC DNA]</scope>
    <source>
        <strain>DSM 17436 / LMG 22146 / PsJN</strain>
    </source>
</reference>
<comment type="function">
    <text evidence="1">Catalyzes the ferrous insertion into protoporphyrin IX.</text>
</comment>
<comment type="catalytic activity">
    <reaction evidence="1">
        <text>heme b + 2 H(+) = protoporphyrin IX + Fe(2+)</text>
        <dbReference type="Rhea" id="RHEA:22584"/>
        <dbReference type="ChEBI" id="CHEBI:15378"/>
        <dbReference type="ChEBI" id="CHEBI:29033"/>
        <dbReference type="ChEBI" id="CHEBI:57306"/>
        <dbReference type="ChEBI" id="CHEBI:60344"/>
        <dbReference type="EC" id="4.98.1.1"/>
    </reaction>
</comment>
<comment type="pathway">
    <text evidence="1">Porphyrin-containing compound metabolism; protoheme biosynthesis; protoheme from protoporphyrin-IX: step 1/1.</text>
</comment>
<comment type="subcellular location">
    <subcellularLocation>
        <location evidence="1">Cytoplasm</location>
    </subcellularLocation>
</comment>
<comment type="similarity">
    <text evidence="1">Belongs to the ferrochelatase family.</text>
</comment>
<gene>
    <name evidence="1" type="primary">hemH</name>
    <name type="ordered locus">Bphyt_0733</name>
</gene>
<dbReference type="EC" id="4.98.1.1" evidence="1"/>
<dbReference type="EMBL" id="CP001052">
    <property type="protein sequence ID" value="ACD15157.1"/>
    <property type="molecule type" value="Genomic_DNA"/>
</dbReference>
<dbReference type="RefSeq" id="WP_012431793.1">
    <property type="nucleotide sequence ID" value="NC_010681.1"/>
</dbReference>
<dbReference type="SMR" id="B2SXB8"/>
<dbReference type="STRING" id="398527.Bphyt_0733"/>
<dbReference type="KEGG" id="bpy:Bphyt_0733"/>
<dbReference type="eggNOG" id="COG0276">
    <property type="taxonomic scope" value="Bacteria"/>
</dbReference>
<dbReference type="HOGENOM" id="CLU_018884_0_0_4"/>
<dbReference type="OrthoDB" id="9809741at2"/>
<dbReference type="UniPathway" id="UPA00252">
    <property type="reaction ID" value="UER00325"/>
</dbReference>
<dbReference type="Proteomes" id="UP000001739">
    <property type="component" value="Chromosome 1"/>
</dbReference>
<dbReference type="GO" id="GO:0005737">
    <property type="term" value="C:cytoplasm"/>
    <property type="evidence" value="ECO:0007669"/>
    <property type="project" value="UniProtKB-SubCell"/>
</dbReference>
<dbReference type="GO" id="GO:0004325">
    <property type="term" value="F:ferrochelatase activity"/>
    <property type="evidence" value="ECO:0007669"/>
    <property type="project" value="UniProtKB-UniRule"/>
</dbReference>
<dbReference type="GO" id="GO:0046872">
    <property type="term" value="F:metal ion binding"/>
    <property type="evidence" value="ECO:0007669"/>
    <property type="project" value="UniProtKB-KW"/>
</dbReference>
<dbReference type="GO" id="GO:0006783">
    <property type="term" value="P:heme biosynthetic process"/>
    <property type="evidence" value="ECO:0007669"/>
    <property type="project" value="UniProtKB-UniRule"/>
</dbReference>
<dbReference type="CDD" id="cd00419">
    <property type="entry name" value="Ferrochelatase_C"/>
    <property type="match status" value="1"/>
</dbReference>
<dbReference type="CDD" id="cd03411">
    <property type="entry name" value="Ferrochelatase_N"/>
    <property type="match status" value="1"/>
</dbReference>
<dbReference type="FunFam" id="3.40.50.1400:FF:000002">
    <property type="entry name" value="Ferrochelatase"/>
    <property type="match status" value="1"/>
</dbReference>
<dbReference type="Gene3D" id="3.40.50.1400">
    <property type="match status" value="2"/>
</dbReference>
<dbReference type="HAMAP" id="MF_00323">
    <property type="entry name" value="Ferrochelatase"/>
    <property type="match status" value="1"/>
</dbReference>
<dbReference type="InterPro" id="IPR001015">
    <property type="entry name" value="Ferrochelatase"/>
</dbReference>
<dbReference type="InterPro" id="IPR019772">
    <property type="entry name" value="Ferrochelatase_AS"/>
</dbReference>
<dbReference type="InterPro" id="IPR033644">
    <property type="entry name" value="Ferrochelatase_C"/>
</dbReference>
<dbReference type="InterPro" id="IPR033659">
    <property type="entry name" value="Ferrochelatase_N"/>
</dbReference>
<dbReference type="NCBIfam" id="TIGR00109">
    <property type="entry name" value="hemH"/>
    <property type="match status" value="1"/>
</dbReference>
<dbReference type="PANTHER" id="PTHR11108">
    <property type="entry name" value="FERROCHELATASE"/>
    <property type="match status" value="1"/>
</dbReference>
<dbReference type="PANTHER" id="PTHR11108:SF1">
    <property type="entry name" value="FERROCHELATASE, MITOCHONDRIAL"/>
    <property type="match status" value="1"/>
</dbReference>
<dbReference type="Pfam" id="PF00762">
    <property type="entry name" value="Ferrochelatase"/>
    <property type="match status" value="1"/>
</dbReference>
<dbReference type="SUPFAM" id="SSF53800">
    <property type="entry name" value="Chelatase"/>
    <property type="match status" value="1"/>
</dbReference>
<dbReference type="PROSITE" id="PS00534">
    <property type="entry name" value="FERROCHELATASE"/>
    <property type="match status" value="1"/>
</dbReference>
<feature type="chain" id="PRO_1000116035" description="Ferrochelatase">
    <location>
        <begin position="1"/>
        <end position="356"/>
    </location>
</feature>
<feature type="binding site" evidence="1">
    <location>
        <position position="214"/>
    </location>
    <ligand>
        <name>Fe cation</name>
        <dbReference type="ChEBI" id="CHEBI:24875"/>
    </ligand>
</feature>
<feature type="binding site" evidence="1">
    <location>
        <position position="295"/>
    </location>
    <ligand>
        <name>Fe cation</name>
        <dbReference type="ChEBI" id="CHEBI:24875"/>
    </ligand>
</feature>
<accession>B2SXB8</accession>